<keyword id="KW-1185">Reference proteome</keyword>
<name>Y3701_DICDI</name>
<feature type="chain" id="PRO_0000365740" description="Uncharacterized protein DDB_G0273701/DDB_G0273221">
    <location>
        <begin position="1"/>
        <end position="225"/>
    </location>
</feature>
<accession>Q557A2</accession>
<accession>Q86JS3</accession>
<comment type="caution">
    <text evidence="1">The gene for this protein is duplicated in strains AX3 and AX4. These strains contain a duplication of a segment of 750 kb of chromosome 2 compared to the corresponding sequence in strain AX2.</text>
</comment>
<protein>
    <recommendedName>
        <fullName>Uncharacterized protein DDB_G0273701/DDB_G0273221</fullName>
    </recommendedName>
</protein>
<proteinExistence type="predicted"/>
<dbReference type="EMBL" id="AAFI02000011">
    <property type="protein sequence ID" value="EAL70541.1"/>
    <property type="molecule type" value="Genomic_DNA"/>
</dbReference>
<dbReference type="EMBL" id="AAFI02000009">
    <property type="protein sequence ID" value="EAL70828.1"/>
    <property type="molecule type" value="Genomic_DNA"/>
</dbReference>
<dbReference type="RefSeq" id="XP_644467.1">
    <property type="nucleotide sequence ID" value="XM_639375.1"/>
</dbReference>
<dbReference type="RefSeq" id="XP_644783.1">
    <property type="nucleotide sequence ID" value="XM_639691.1"/>
</dbReference>
<dbReference type="PaxDb" id="44689-DDB0238778"/>
<dbReference type="EnsemblProtists" id="EAL70541">
    <property type="protein sequence ID" value="EAL70541"/>
    <property type="gene ID" value="DDB_G0273701"/>
</dbReference>
<dbReference type="EnsemblProtists" id="EAL70828">
    <property type="protein sequence ID" value="EAL70828"/>
    <property type="gene ID" value="DDB_G0273221"/>
</dbReference>
<dbReference type="GeneID" id="8618885"/>
<dbReference type="GeneID" id="8619092"/>
<dbReference type="KEGG" id="ddi:DDB_G0273221"/>
<dbReference type="KEGG" id="ddi:DDB_G0273701"/>
<dbReference type="dictyBase" id="DDB_G0273221"/>
<dbReference type="dictyBase" id="DDB_G0273701"/>
<dbReference type="VEuPathDB" id="AmoebaDB:DDB_G0273221"/>
<dbReference type="eggNOG" id="ENOG502SVJ0">
    <property type="taxonomic scope" value="Eukaryota"/>
</dbReference>
<dbReference type="HOGENOM" id="CLU_094639_0_0_1"/>
<dbReference type="InParanoid" id="Q557A2"/>
<dbReference type="OMA" id="GRYEDDC"/>
<dbReference type="PhylomeDB" id="Q557A2"/>
<dbReference type="PRO" id="PR:Q557A2"/>
<dbReference type="Proteomes" id="UP000002195">
    <property type="component" value="Chromosome 2"/>
</dbReference>
<organism>
    <name type="scientific">Dictyostelium discoideum</name>
    <name type="common">Social amoeba</name>
    <dbReference type="NCBI Taxonomy" id="44689"/>
    <lineage>
        <taxon>Eukaryota</taxon>
        <taxon>Amoebozoa</taxon>
        <taxon>Evosea</taxon>
        <taxon>Eumycetozoa</taxon>
        <taxon>Dictyostelia</taxon>
        <taxon>Dictyosteliales</taxon>
        <taxon>Dictyosteliaceae</taxon>
        <taxon>Dictyostelium</taxon>
    </lineage>
</organism>
<evidence type="ECO:0000305" key="1"/>
<reference key="1">
    <citation type="journal article" date="2002" name="Nature">
        <title>Sequence and analysis of chromosome 2 of Dictyostelium discoideum.</title>
        <authorList>
            <person name="Gloeckner G."/>
            <person name="Eichinger L."/>
            <person name="Szafranski K."/>
            <person name="Pachebat J.A."/>
            <person name="Bankier A.T."/>
            <person name="Dear P.H."/>
            <person name="Lehmann R."/>
            <person name="Baumgart C."/>
            <person name="Parra G."/>
            <person name="Abril J.F."/>
            <person name="Guigo R."/>
            <person name="Kumpf K."/>
            <person name="Tunggal B."/>
            <person name="Cox E.C."/>
            <person name="Quail M.A."/>
            <person name="Platzer M."/>
            <person name="Rosenthal A."/>
            <person name="Noegel A.A."/>
        </authorList>
    </citation>
    <scope>NUCLEOTIDE SEQUENCE [LARGE SCALE GENOMIC DNA]</scope>
    <source>
        <strain>AX4</strain>
    </source>
</reference>
<reference key="2">
    <citation type="journal article" date="2005" name="Nature">
        <title>The genome of the social amoeba Dictyostelium discoideum.</title>
        <authorList>
            <person name="Eichinger L."/>
            <person name="Pachebat J.A."/>
            <person name="Gloeckner G."/>
            <person name="Rajandream M.A."/>
            <person name="Sucgang R."/>
            <person name="Berriman M."/>
            <person name="Song J."/>
            <person name="Olsen R."/>
            <person name="Szafranski K."/>
            <person name="Xu Q."/>
            <person name="Tunggal B."/>
            <person name="Kummerfeld S."/>
            <person name="Madera M."/>
            <person name="Konfortov B.A."/>
            <person name="Rivero F."/>
            <person name="Bankier A.T."/>
            <person name="Lehmann R."/>
            <person name="Hamlin N."/>
            <person name="Davies R."/>
            <person name="Gaudet P."/>
            <person name="Fey P."/>
            <person name="Pilcher K."/>
            <person name="Chen G."/>
            <person name="Saunders D."/>
            <person name="Sodergren E.J."/>
            <person name="Davis P."/>
            <person name="Kerhornou A."/>
            <person name="Nie X."/>
            <person name="Hall N."/>
            <person name="Anjard C."/>
            <person name="Hemphill L."/>
            <person name="Bason N."/>
            <person name="Farbrother P."/>
            <person name="Desany B."/>
            <person name="Just E."/>
            <person name="Morio T."/>
            <person name="Rost R."/>
            <person name="Churcher C.M."/>
            <person name="Cooper J."/>
            <person name="Haydock S."/>
            <person name="van Driessche N."/>
            <person name="Cronin A."/>
            <person name="Goodhead I."/>
            <person name="Muzny D.M."/>
            <person name="Mourier T."/>
            <person name="Pain A."/>
            <person name="Lu M."/>
            <person name="Harper D."/>
            <person name="Lindsay R."/>
            <person name="Hauser H."/>
            <person name="James K.D."/>
            <person name="Quiles M."/>
            <person name="Madan Babu M."/>
            <person name="Saito T."/>
            <person name="Buchrieser C."/>
            <person name="Wardroper A."/>
            <person name="Felder M."/>
            <person name="Thangavelu M."/>
            <person name="Johnson D."/>
            <person name="Knights A."/>
            <person name="Loulseged H."/>
            <person name="Mungall K.L."/>
            <person name="Oliver K."/>
            <person name="Price C."/>
            <person name="Quail M.A."/>
            <person name="Urushihara H."/>
            <person name="Hernandez J."/>
            <person name="Rabbinowitsch E."/>
            <person name="Steffen D."/>
            <person name="Sanders M."/>
            <person name="Ma J."/>
            <person name="Kohara Y."/>
            <person name="Sharp S."/>
            <person name="Simmonds M.N."/>
            <person name="Spiegler S."/>
            <person name="Tivey A."/>
            <person name="Sugano S."/>
            <person name="White B."/>
            <person name="Walker D."/>
            <person name="Woodward J.R."/>
            <person name="Winckler T."/>
            <person name="Tanaka Y."/>
            <person name="Shaulsky G."/>
            <person name="Schleicher M."/>
            <person name="Weinstock G.M."/>
            <person name="Rosenthal A."/>
            <person name="Cox E.C."/>
            <person name="Chisholm R.L."/>
            <person name="Gibbs R.A."/>
            <person name="Loomis W.F."/>
            <person name="Platzer M."/>
            <person name="Kay R.R."/>
            <person name="Williams J.G."/>
            <person name="Dear P.H."/>
            <person name="Noegel A.A."/>
            <person name="Barrell B.G."/>
            <person name="Kuspa A."/>
        </authorList>
    </citation>
    <scope>NUCLEOTIDE SEQUENCE [LARGE SCALE GENOMIC DNA]</scope>
    <source>
        <strain>AX4</strain>
    </source>
</reference>
<gene>
    <name type="ORF">DDB_G0273701</name>
</gene>
<gene>
    <name type="ORF">DDB_G0273221</name>
</gene>
<sequence length="225" mass="23793">MKLLKSLLFLASVLFISSQAEKKVTGELTFYAAGDNCPPSGEIAYPGLHSSAGGLGTYANPITVAASTAWLSAGKKVYVAAYKKYFIMEDSCEECENEWDSNGKYHMDAWIGPSTIHSGTTNCEVALTLSSTQFIIDPLSTYAVDTTAFFNGTTGACLKTPDNCVDQGNECGNTCQIPSSMSCSSAASMFLLSETRFKALNPNLDCTKNIAKGKSVCQSGSCGGP</sequence>